<gene>
    <name type="primary">Lmo3</name>
</gene>
<comment type="induction">
    <text>By dopamine.</text>
</comment>
<comment type="sequence caution" evidence="2">
    <conflict type="erroneous initiation">
        <sequence resource="EMBL-CDS" id="AAK31207"/>
    </conflict>
</comment>
<dbReference type="EMBL" id="AF353304">
    <property type="protein sequence ID" value="AAK31207.1"/>
    <property type="status" value="ALT_INIT"/>
    <property type="molecule type" value="mRNA"/>
</dbReference>
<dbReference type="SMR" id="Q99MB5"/>
<dbReference type="FunCoup" id="Q99MB5">
    <property type="interactions" value="2"/>
</dbReference>
<dbReference type="STRING" id="10116.ENSRNOP00000064297"/>
<dbReference type="PhosphoSitePlus" id="Q99MB5"/>
<dbReference type="PaxDb" id="10116-ENSRNOP00000064297"/>
<dbReference type="UCSC" id="RGD:621166">
    <property type="organism name" value="rat"/>
</dbReference>
<dbReference type="AGR" id="RGD:1561357"/>
<dbReference type="AGR" id="RGD:621166"/>
<dbReference type="RGD" id="621166">
    <property type="gene designation" value="Lmo3"/>
</dbReference>
<dbReference type="eggNOG" id="KOG0490">
    <property type="taxonomic scope" value="Eukaryota"/>
</dbReference>
<dbReference type="InParanoid" id="Q99MB5"/>
<dbReference type="PhylomeDB" id="Q99MB5"/>
<dbReference type="Reactome" id="R-RNO-8939236">
    <property type="pathway name" value="RUNX1 regulates transcription of genes involved in differentiation of HSCs"/>
</dbReference>
<dbReference type="PRO" id="PR:Q99MB5"/>
<dbReference type="Proteomes" id="UP000002494">
    <property type="component" value="Unplaced"/>
</dbReference>
<dbReference type="GO" id="GO:0005634">
    <property type="term" value="C:nucleus"/>
    <property type="evidence" value="ECO:0000266"/>
    <property type="project" value="RGD"/>
</dbReference>
<dbReference type="GO" id="GO:0140297">
    <property type="term" value="F:DNA-binding transcription factor binding"/>
    <property type="evidence" value="ECO:0000318"/>
    <property type="project" value="GO_Central"/>
</dbReference>
<dbReference type="GO" id="GO:0046872">
    <property type="term" value="F:metal ion binding"/>
    <property type="evidence" value="ECO:0007669"/>
    <property type="project" value="UniProtKB-KW"/>
</dbReference>
<dbReference type="GO" id="GO:0003713">
    <property type="term" value="F:transcription coactivator activity"/>
    <property type="evidence" value="ECO:0000318"/>
    <property type="project" value="GO_Central"/>
</dbReference>
<dbReference type="GO" id="GO:0000122">
    <property type="term" value="P:negative regulation of transcription by RNA polymerase II"/>
    <property type="evidence" value="ECO:0000266"/>
    <property type="project" value="RGD"/>
</dbReference>
<dbReference type="GO" id="GO:0045944">
    <property type="term" value="P:positive regulation of transcription by RNA polymerase II"/>
    <property type="evidence" value="ECO:0000266"/>
    <property type="project" value="RGD"/>
</dbReference>
<dbReference type="GO" id="GO:0046013">
    <property type="term" value="P:regulation of T cell homeostatic proliferation"/>
    <property type="evidence" value="ECO:0000266"/>
    <property type="project" value="RGD"/>
</dbReference>
<dbReference type="CDD" id="cd09388">
    <property type="entry name" value="LIM1_LMO1_LMO3"/>
    <property type="match status" value="1"/>
</dbReference>
<dbReference type="CDD" id="cd09389">
    <property type="entry name" value="LIM2_LMO1_LMO3"/>
    <property type="match status" value="1"/>
</dbReference>
<dbReference type="FunFam" id="2.10.110.10:FF:000015">
    <property type="entry name" value="LIM domain only 3"/>
    <property type="match status" value="1"/>
</dbReference>
<dbReference type="FunFam" id="2.10.110.10:FF:000016">
    <property type="entry name" value="LIM domain only 3"/>
    <property type="match status" value="1"/>
</dbReference>
<dbReference type="Gene3D" id="2.10.110.10">
    <property type="entry name" value="Cysteine Rich Protein"/>
    <property type="match status" value="2"/>
</dbReference>
<dbReference type="InterPro" id="IPR050945">
    <property type="entry name" value="LMO_RBTN_TF"/>
</dbReference>
<dbReference type="InterPro" id="IPR001781">
    <property type="entry name" value="Znf_LIM"/>
</dbReference>
<dbReference type="PANTHER" id="PTHR45787">
    <property type="entry name" value="LD11652P"/>
    <property type="match status" value="1"/>
</dbReference>
<dbReference type="PANTHER" id="PTHR45787:SF2">
    <property type="entry name" value="RHOMBOTIN-1"/>
    <property type="match status" value="1"/>
</dbReference>
<dbReference type="Pfam" id="PF00412">
    <property type="entry name" value="LIM"/>
    <property type="match status" value="2"/>
</dbReference>
<dbReference type="SMART" id="SM00132">
    <property type="entry name" value="LIM"/>
    <property type="match status" value="2"/>
</dbReference>
<dbReference type="SUPFAM" id="SSF57716">
    <property type="entry name" value="Glucocorticoid receptor-like (DNA-binding domain)"/>
    <property type="match status" value="3"/>
</dbReference>
<dbReference type="PROSITE" id="PS00478">
    <property type="entry name" value="LIM_DOMAIN_1"/>
    <property type="match status" value="2"/>
</dbReference>
<dbReference type="PROSITE" id="PS50023">
    <property type="entry name" value="LIM_DOMAIN_2"/>
    <property type="match status" value="2"/>
</dbReference>
<proteinExistence type="evidence at transcript level"/>
<accession>Q99MB5</accession>
<keyword id="KW-0440">LIM domain</keyword>
<keyword id="KW-0479">Metal-binding</keyword>
<keyword id="KW-1185">Reference proteome</keyword>
<keyword id="KW-0677">Repeat</keyword>
<keyword id="KW-0804">Transcription</keyword>
<keyword id="KW-0805">Transcription regulation</keyword>
<keyword id="KW-0862">Zinc</keyword>
<name>LMO3_RAT</name>
<protein>
    <recommendedName>
        <fullName>LIM domain only protein 3</fullName>
        <shortName>LMO-3</shortName>
    </recommendedName>
    <alternativeName>
        <fullName>Neuronal-specific transcription factor DAT1</fullName>
    </alternativeName>
</protein>
<feature type="chain" id="PRO_0000075819" description="LIM domain only protein 3">
    <location>
        <begin position="1"/>
        <end position="145"/>
    </location>
</feature>
<feature type="domain" description="LIM zinc-binding 1" evidence="1">
    <location>
        <begin position="11"/>
        <end position="73"/>
    </location>
</feature>
<feature type="domain" description="LIM zinc-binding 2" evidence="1">
    <location>
        <begin position="75"/>
        <end position="137"/>
    </location>
</feature>
<evidence type="ECO:0000255" key="1">
    <source>
        <dbReference type="PROSITE-ProRule" id="PRU00125"/>
    </source>
</evidence>
<evidence type="ECO:0000305" key="2"/>
<sequence>MLSVQPKGKQKGCAGCNRKIKDRYLLKALDKYWHEDCLKCACCDCRLGEVGSTLYTKANLILCRRDYLRLFGTTGNCAACSKLIPAFEMVMRARDNVYHLDCFACQLCNQRFCVGDKFFLKNNMILCQTDYEEGLMKEGYAPQVR</sequence>
<reference key="1">
    <citation type="submission" date="2001-02" db="EMBL/GenBank/DDBJ databases">
        <title>Molecular cloning and characterization of a new dopamine-inducible LIM-domain transcription factor from cultured astrocytes.</title>
        <authorList>
            <person name="Shi J."/>
            <person name="Cai W."/>
            <person name="Xie Y.Y."/>
            <person name="Ying K."/>
            <person name="Wu C."/>
            <person name="Zhou Z."/>
        </authorList>
    </citation>
    <scope>NUCLEOTIDE SEQUENCE [MRNA]</scope>
    <source>
        <strain>Sprague-Dawley</strain>
    </source>
</reference>
<organism>
    <name type="scientific">Rattus norvegicus</name>
    <name type="common">Rat</name>
    <dbReference type="NCBI Taxonomy" id="10116"/>
    <lineage>
        <taxon>Eukaryota</taxon>
        <taxon>Metazoa</taxon>
        <taxon>Chordata</taxon>
        <taxon>Craniata</taxon>
        <taxon>Vertebrata</taxon>
        <taxon>Euteleostomi</taxon>
        <taxon>Mammalia</taxon>
        <taxon>Eutheria</taxon>
        <taxon>Euarchontoglires</taxon>
        <taxon>Glires</taxon>
        <taxon>Rodentia</taxon>
        <taxon>Myomorpha</taxon>
        <taxon>Muroidea</taxon>
        <taxon>Muridae</taxon>
        <taxon>Murinae</taxon>
        <taxon>Rattus</taxon>
    </lineage>
</organism>